<proteinExistence type="inferred from homology"/>
<reference key="1">
    <citation type="journal article" date="2007" name="PLoS Genet.">
        <title>Patterns and implications of gene gain and loss in the evolution of Prochlorococcus.</title>
        <authorList>
            <person name="Kettler G.C."/>
            <person name="Martiny A.C."/>
            <person name="Huang K."/>
            <person name="Zucker J."/>
            <person name="Coleman M.L."/>
            <person name="Rodrigue S."/>
            <person name="Chen F."/>
            <person name="Lapidus A."/>
            <person name="Ferriera S."/>
            <person name="Johnson J."/>
            <person name="Steglich C."/>
            <person name="Church G.M."/>
            <person name="Richardson P."/>
            <person name="Chisholm S.W."/>
        </authorList>
    </citation>
    <scope>NUCLEOTIDE SEQUENCE [LARGE SCALE GENOMIC DNA]</scope>
    <source>
        <strain>MIT 9515</strain>
    </source>
</reference>
<comment type="function">
    <text evidence="1">Produces ATP from ADP in the presence of a proton gradient across the membrane. The catalytic sites are hosted primarily by the beta subunits.</text>
</comment>
<comment type="catalytic activity">
    <reaction evidence="1">
        <text>ATP + H2O + 4 H(+)(in) = ADP + phosphate + 5 H(+)(out)</text>
        <dbReference type="Rhea" id="RHEA:57720"/>
        <dbReference type="ChEBI" id="CHEBI:15377"/>
        <dbReference type="ChEBI" id="CHEBI:15378"/>
        <dbReference type="ChEBI" id="CHEBI:30616"/>
        <dbReference type="ChEBI" id="CHEBI:43474"/>
        <dbReference type="ChEBI" id="CHEBI:456216"/>
        <dbReference type="EC" id="7.1.2.2"/>
    </reaction>
</comment>
<comment type="subunit">
    <text evidence="1">F-type ATPases have 2 components, CF(1) - the catalytic core - and CF(0) - the membrane proton channel. CF(1) has five subunits: alpha(3), beta(3), gamma(1), delta(1), epsilon(1). CF(0) has four main subunits: a(1), b(1), b'(1) and c(9-12).</text>
</comment>
<comment type="subcellular location">
    <subcellularLocation>
        <location evidence="1">Cellular thylakoid membrane</location>
        <topology evidence="1">Peripheral membrane protein</topology>
    </subcellularLocation>
</comment>
<comment type="similarity">
    <text evidence="1">Belongs to the ATPase alpha/beta chains family.</text>
</comment>
<gene>
    <name evidence="1" type="primary">atpD</name>
    <name evidence="1" type="synonym">atpB</name>
    <name type="ordered locus">P9515_16171</name>
</gene>
<keyword id="KW-0066">ATP synthesis</keyword>
<keyword id="KW-0067">ATP-binding</keyword>
<keyword id="KW-0139">CF(1)</keyword>
<keyword id="KW-0375">Hydrogen ion transport</keyword>
<keyword id="KW-0406">Ion transport</keyword>
<keyword id="KW-0472">Membrane</keyword>
<keyword id="KW-0547">Nucleotide-binding</keyword>
<keyword id="KW-0793">Thylakoid</keyword>
<keyword id="KW-1278">Translocase</keyword>
<keyword id="KW-0813">Transport</keyword>
<sequence length="486" mass="51972">MVATPSTSAPTKGVVRQVIGPVLDVEFPAGKLPKILNALRIESKNPAGQDIALTAEVQQLLGDHRVRAVAMSGTDGLVRGMEATDTGAPISVPVGEATLGRIFNVLGEPVDEQGPVKTSDTAPIHRSAPKLTDLETKPKVFETGIKVIDLLAPYRQGGKVGLFGGAGVGKTVLIQELINNIAKEHGGVSVFGGVGERTREGNDLYEEFKESGVINAEDLSQSKVALCFGQMNEPPGARMRVGLSALTMAEHFRDVNKQDVLLFVDNIFRFVQAGSEVSALLGRMPSAVGYQPTLGTDVGALQERITSTLEGSITSIQAVYVPADDLTDPAPATTFAHLDATTVLARGLAAKGIYPAVDPLDSTSTMLQPSVVGDDHYKTARAVQSTLQRYKELQDIIAILGLDELSEEDRLTVSRARKIEKFLSQPFFVAEIFTGMSGKYVKLEDTIAGFNMILAGELDDLPEQAFYLVGNIEEVKAKADKINSEK</sequence>
<feature type="chain" id="PRO_1000055144" description="ATP synthase subunit beta">
    <location>
        <begin position="1"/>
        <end position="486"/>
    </location>
</feature>
<feature type="binding site" evidence="1">
    <location>
        <begin position="164"/>
        <end position="171"/>
    </location>
    <ligand>
        <name>ATP</name>
        <dbReference type="ChEBI" id="CHEBI:30616"/>
    </ligand>
</feature>
<organism>
    <name type="scientific">Prochlorococcus marinus (strain MIT 9515)</name>
    <dbReference type="NCBI Taxonomy" id="167542"/>
    <lineage>
        <taxon>Bacteria</taxon>
        <taxon>Bacillati</taxon>
        <taxon>Cyanobacteriota</taxon>
        <taxon>Cyanophyceae</taxon>
        <taxon>Synechococcales</taxon>
        <taxon>Prochlorococcaceae</taxon>
        <taxon>Prochlorococcus</taxon>
    </lineage>
</organism>
<dbReference type="EC" id="7.1.2.2" evidence="1"/>
<dbReference type="EMBL" id="CP000552">
    <property type="protein sequence ID" value="ABM72824.1"/>
    <property type="molecule type" value="Genomic_DNA"/>
</dbReference>
<dbReference type="RefSeq" id="WP_011820919.1">
    <property type="nucleotide sequence ID" value="NC_008817.1"/>
</dbReference>
<dbReference type="SMR" id="A2BYG3"/>
<dbReference type="STRING" id="167542.P9515_16171"/>
<dbReference type="GeneID" id="60200923"/>
<dbReference type="KEGG" id="pmc:P9515_16171"/>
<dbReference type="eggNOG" id="COG0055">
    <property type="taxonomic scope" value="Bacteria"/>
</dbReference>
<dbReference type="HOGENOM" id="CLU_022398_0_2_3"/>
<dbReference type="OrthoDB" id="9801639at2"/>
<dbReference type="Proteomes" id="UP000001589">
    <property type="component" value="Chromosome"/>
</dbReference>
<dbReference type="GO" id="GO:0031676">
    <property type="term" value="C:plasma membrane-derived thylakoid membrane"/>
    <property type="evidence" value="ECO:0007669"/>
    <property type="project" value="UniProtKB-SubCell"/>
</dbReference>
<dbReference type="GO" id="GO:0045259">
    <property type="term" value="C:proton-transporting ATP synthase complex"/>
    <property type="evidence" value="ECO:0007669"/>
    <property type="project" value="UniProtKB-KW"/>
</dbReference>
<dbReference type="GO" id="GO:0005524">
    <property type="term" value="F:ATP binding"/>
    <property type="evidence" value="ECO:0007669"/>
    <property type="project" value="UniProtKB-UniRule"/>
</dbReference>
<dbReference type="GO" id="GO:0016887">
    <property type="term" value="F:ATP hydrolysis activity"/>
    <property type="evidence" value="ECO:0007669"/>
    <property type="project" value="InterPro"/>
</dbReference>
<dbReference type="GO" id="GO:0046933">
    <property type="term" value="F:proton-transporting ATP synthase activity, rotational mechanism"/>
    <property type="evidence" value="ECO:0007669"/>
    <property type="project" value="UniProtKB-UniRule"/>
</dbReference>
<dbReference type="CDD" id="cd18110">
    <property type="entry name" value="ATP-synt_F1_beta_C"/>
    <property type="match status" value="1"/>
</dbReference>
<dbReference type="CDD" id="cd18115">
    <property type="entry name" value="ATP-synt_F1_beta_N"/>
    <property type="match status" value="1"/>
</dbReference>
<dbReference type="CDD" id="cd01133">
    <property type="entry name" value="F1-ATPase_beta_CD"/>
    <property type="match status" value="1"/>
</dbReference>
<dbReference type="FunFam" id="1.10.1140.10:FF:000001">
    <property type="entry name" value="ATP synthase subunit beta"/>
    <property type="match status" value="1"/>
</dbReference>
<dbReference type="FunFam" id="3.40.50.300:FF:000026">
    <property type="entry name" value="ATP synthase subunit beta"/>
    <property type="match status" value="1"/>
</dbReference>
<dbReference type="FunFam" id="2.40.10.170:FF:000002">
    <property type="entry name" value="ATP synthase subunit beta, chloroplastic"/>
    <property type="match status" value="1"/>
</dbReference>
<dbReference type="Gene3D" id="2.40.10.170">
    <property type="match status" value="1"/>
</dbReference>
<dbReference type="Gene3D" id="1.10.1140.10">
    <property type="entry name" value="Bovine Mitochondrial F1-atpase, Atp Synthase Beta Chain, Chain D, domain 3"/>
    <property type="match status" value="1"/>
</dbReference>
<dbReference type="Gene3D" id="3.40.50.300">
    <property type="entry name" value="P-loop containing nucleotide triphosphate hydrolases"/>
    <property type="match status" value="1"/>
</dbReference>
<dbReference type="HAMAP" id="MF_01347">
    <property type="entry name" value="ATP_synth_beta_bact"/>
    <property type="match status" value="1"/>
</dbReference>
<dbReference type="InterPro" id="IPR003593">
    <property type="entry name" value="AAA+_ATPase"/>
</dbReference>
<dbReference type="InterPro" id="IPR055190">
    <property type="entry name" value="ATP-synt_VA_C"/>
</dbReference>
<dbReference type="InterPro" id="IPR005722">
    <property type="entry name" value="ATP_synth_F1_bsu"/>
</dbReference>
<dbReference type="InterPro" id="IPR020003">
    <property type="entry name" value="ATPase_a/bsu_AS"/>
</dbReference>
<dbReference type="InterPro" id="IPR050053">
    <property type="entry name" value="ATPase_alpha/beta_chains"/>
</dbReference>
<dbReference type="InterPro" id="IPR004100">
    <property type="entry name" value="ATPase_F1/V1/A1_a/bsu_N"/>
</dbReference>
<dbReference type="InterPro" id="IPR036121">
    <property type="entry name" value="ATPase_F1/V1/A1_a/bsu_N_sf"/>
</dbReference>
<dbReference type="InterPro" id="IPR000194">
    <property type="entry name" value="ATPase_F1/V1/A1_a/bsu_nucl-bd"/>
</dbReference>
<dbReference type="InterPro" id="IPR024034">
    <property type="entry name" value="ATPase_F1/V1_b/a_C"/>
</dbReference>
<dbReference type="InterPro" id="IPR027417">
    <property type="entry name" value="P-loop_NTPase"/>
</dbReference>
<dbReference type="NCBIfam" id="TIGR01039">
    <property type="entry name" value="atpD"/>
    <property type="match status" value="1"/>
</dbReference>
<dbReference type="PANTHER" id="PTHR15184">
    <property type="entry name" value="ATP SYNTHASE"/>
    <property type="match status" value="1"/>
</dbReference>
<dbReference type="PANTHER" id="PTHR15184:SF71">
    <property type="entry name" value="ATP SYNTHASE SUBUNIT BETA, MITOCHONDRIAL"/>
    <property type="match status" value="1"/>
</dbReference>
<dbReference type="Pfam" id="PF00006">
    <property type="entry name" value="ATP-synt_ab"/>
    <property type="match status" value="1"/>
</dbReference>
<dbReference type="Pfam" id="PF02874">
    <property type="entry name" value="ATP-synt_ab_N"/>
    <property type="match status" value="1"/>
</dbReference>
<dbReference type="Pfam" id="PF22919">
    <property type="entry name" value="ATP-synt_VA_C"/>
    <property type="match status" value="1"/>
</dbReference>
<dbReference type="SMART" id="SM00382">
    <property type="entry name" value="AAA"/>
    <property type="match status" value="1"/>
</dbReference>
<dbReference type="SUPFAM" id="SSF47917">
    <property type="entry name" value="C-terminal domain of alpha and beta subunits of F1 ATP synthase"/>
    <property type="match status" value="1"/>
</dbReference>
<dbReference type="SUPFAM" id="SSF50615">
    <property type="entry name" value="N-terminal domain of alpha and beta subunits of F1 ATP synthase"/>
    <property type="match status" value="1"/>
</dbReference>
<dbReference type="SUPFAM" id="SSF52540">
    <property type="entry name" value="P-loop containing nucleoside triphosphate hydrolases"/>
    <property type="match status" value="1"/>
</dbReference>
<dbReference type="PROSITE" id="PS00152">
    <property type="entry name" value="ATPASE_ALPHA_BETA"/>
    <property type="match status" value="1"/>
</dbReference>
<name>ATPB_PROM5</name>
<evidence type="ECO:0000255" key="1">
    <source>
        <dbReference type="HAMAP-Rule" id="MF_01347"/>
    </source>
</evidence>
<protein>
    <recommendedName>
        <fullName evidence="1">ATP synthase subunit beta</fullName>
        <ecNumber evidence="1">7.1.2.2</ecNumber>
    </recommendedName>
    <alternativeName>
        <fullName evidence="1">ATP synthase F1 sector subunit beta</fullName>
    </alternativeName>
    <alternativeName>
        <fullName evidence="1">F-ATPase subunit beta</fullName>
    </alternativeName>
</protein>
<accession>A2BYG3</accession>